<accession>P86319</accession>
<reference key="1">
    <citation type="journal article" date="2010" name="Arch. Microbiol.">
        <title>Evidence from the structure and function of cytochromes c(2) that nonsulfur purple bacterial photosynthesis followed the evolution of oxygen respiration.</title>
        <authorList>
            <person name="Meyer T."/>
            <person name="Van Driessche G."/>
            <person name="Ambler R."/>
            <person name="Kyndt J."/>
            <person name="Devreese B."/>
            <person name="Van Beeumen J."/>
            <person name="Cusanovich M."/>
        </authorList>
    </citation>
    <scope>PROTEIN SEQUENCE</scope>
    <scope>SUBCELLULAR LOCATION</scope>
</reference>
<evidence type="ECO:0000250" key="1">
    <source>
        <dbReference type="UniProtKB" id="P0C0X8"/>
    </source>
</evidence>
<evidence type="ECO:0000255" key="2"/>
<evidence type="ECO:0000255" key="3">
    <source>
        <dbReference type="PROSITE-ProRule" id="PRU00433"/>
    </source>
</evidence>
<evidence type="ECO:0000256" key="4">
    <source>
        <dbReference type="SAM" id="MobiDB-lite"/>
    </source>
</evidence>
<evidence type="ECO:0000269" key="5">
    <source>
    </source>
</evidence>
<evidence type="ECO:0000305" key="6"/>
<organism>
    <name type="scientific">Fuscovulum blasticum</name>
    <name type="common">Rhodobacter blasticus</name>
    <name type="synonym">Rhodopseudomonas blastica</name>
    <dbReference type="NCBI Taxonomy" id="1075"/>
    <lineage>
        <taxon>Bacteria</taxon>
        <taxon>Pseudomonadati</taxon>
        <taxon>Pseudomonadota</taxon>
        <taxon>Alphaproteobacteria</taxon>
        <taxon>Rhodobacterales</taxon>
        <taxon>Paracoccaceae</taxon>
        <taxon>Pseudogemmobacter</taxon>
    </lineage>
</organism>
<dbReference type="SMR" id="P86319"/>
<dbReference type="GO" id="GO:0042597">
    <property type="term" value="C:periplasmic space"/>
    <property type="evidence" value="ECO:0000314"/>
    <property type="project" value="UniProtKB"/>
</dbReference>
<dbReference type="GO" id="GO:0009055">
    <property type="term" value="F:electron transfer activity"/>
    <property type="evidence" value="ECO:0007669"/>
    <property type="project" value="InterPro"/>
</dbReference>
<dbReference type="GO" id="GO:0020037">
    <property type="term" value="F:heme binding"/>
    <property type="evidence" value="ECO:0007669"/>
    <property type="project" value="InterPro"/>
</dbReference>
<dbReference type="GO" id="GO:0046872">
    <property type="term" value="F:metal ion binding"/>
    <property type="evidence" value="ECO:0007669"/>
    <property type="project" value="UniProtKB-KW"/>
</dbReference>
<dbReference type="GO" id="GO:0015979">
    <property type="term" value="P:photosynthesis"/>
    <property type="evidence" value="ECO:0007669"/>
    <property type="project" value="UniProtKB-KW"/>
</dbReference>
<dbReference type="FunFam" id="1.10.760.10:FF:000044">
    <property type="entry name" value="Cytochrome c2"/>
    <property type="match status" value="1"/>
</dbReference>
<dbReference type="Gene3D" id="1.10.760.10">
    <property type="entry name" value="Cytochrome c-like domain"/>
    <property type="match status" value="1"/>
</dbReference>
<dbReference type="InterPro" id="IPR009056">
    <property type="entry name" value="Cyt_c-like_dom"/>
</dbReference>
<dbReference type="InterPro" id="IPR036909">
    <property type="entry name" value="Cyt_c-like_dom_sf"/>
</dbReference>
<dbReference type="SUPFAM" id="SSF46626">
    <property type="entry name" value="Cytochrome c"/>
    <property type="match status" value="1"/>
</dbReference>
<dbReference type="PROSITE" id="PS51007">
    <property type="entry name" value="CYTC"/>
    <property type="match status" value="1"/>
</dbReference>
<proteinExistence type="evidence at protein level"/>
<name>CYC2_FUSBL</name>
<feature type="chain" id="PRO_0000379962" description="Cytochrome c2">
    <location>
        <begin position="1"/>
        <end position="158"/>
    </location>
</feature>
<feature type="region of interest" description="Disordered" evidence="4">
    <location>
        <begin position="129"/>
        <end position="158"/>
    </location>
</feature>
<feature type="binding site" description="covalent" evidence="1 3">
    <location>
        <position position="18"/>
    </location>
    <ligand>
        <name>heme c</name>
        <dbReference type="ChEBI" id="CHEBI:61717"/>
    </ligand>
</feature>
<feature type="binding site" description="covalent" evidence="1 3">
    <location>
        <position position="21"/>
    </location>
    <ligand>
        <name>heme c</name>
        <dbReference type="ChEBI" id="CHEBI:61717"/>
    </ligand>
</feature>
<feature type="binding site" description="axial binding residue" evidence="1 3">
    <location>
        <position position="22"/>
    </location>
    <ligand>
        <name>heme c</name>
        <dbReference type="ChEBI" id="CHEBI:61717"/>
    </ligand>
    <ligandPart>
        <name>Fe</name>
        <dbReference type="ChEBI" id="CHEBI:18248"/>
    </ligandPart>
</feature>
<feature type="binding site" description="axial binding residue" evidence="1 3">
    <location>
        <position position="102"/>
    </location>
    <ligand>
        <name>heme c</name>
        <dbReference type="ChEBI" id="CHEBI:61717"/>
    </ligand>
    <ligandPart>
        <name>Fe</name>
        <dbReference type="ChEBI" id="CHEBI:18248"/>
    </ligandPart>
</feature>
<feature type="modified residue" description="Pyrrolidone carboxylic acid" evidence="1">
    <location>
        <position position="1"/>
    </location>
</feature>
<comment type="function">
    <text evidence="6">Cytochrome c2 is found mainly in purple, non-sulfur, photosynthetic bacteria where it functions as the electron donor to the oxidized bacteriochlorophyll in the photophosphorylation pathway. However, it may also have a role in the respiratory chain and is found in some non-photosynthetic bacteria.</text>
</comment>
<comment type="subcellular location">
    <subcellularLocation>
        <location evidence="5">Periplasm</location>
    </subcellularLocation>
</comment>
<comment type="PTM">
    <text evidence="1">Binds 1 heme c group covalently per subunit.</text>
</comment>
<comment type="similarity">
    <text evidence="2">Belongs to the cytochrome c family.</text>
</comment>
<keyword id="KW-0903">Direct protein sequencing</keyword>
<keyword id="KW-0249">Electron transport</keyword>
<keyword id="KW-0349">Heme</keyword>
<keyword id="KW-0408">Iron</keyword>
<keyword id="KW-0479">Metal-binding</keyword>
<keyword id="KW-0574">Periplasm</keyword>
<keyword id="KW-0602">Photosynthesis</keyword>
<keyword id="KW-0873">Pyrrolidone carboxylic acid</keyword>
<keyword id="KW-0813">Transport</keyword>
<protein>
    <recommendedName>
        <fullName evidence="1">Cytochrome c2</fullName>
    </recommendedName>
</protein>
<sequence>QDAPTGDAAAGAKVFNKCQTCHMVVAPDGTVLAGKAGKTGNPLYGLDGRAPASYPDFAYGDGIKELGAAGEVWNEADFLQYVADPTKFLKTKTGDTKAKGKMTFKLPNEKEAHDVWAFLNSLAPAPAAAEAAPAADAAAPAAADAAAPAEPAAEGAAT</sequence>